<keyword id="KW-1015">Disulfide bond</keyword>
<keyword id="KW-0328">Glycosyltransferase</keyword>
<keyword id="KW-0333">Golgi apparatus</keyword>
<keyword id="KW-0460">Magnesium</keyword>
<keyword id="KW-0464">Manganese</keyword>
<keyword id="KW-0472">Membrane</keyword>
<keyword id="KW-0479">Metal-binding</keyword>
<keyword id="KW-1185">Reference proteome</keyword>
<keyword id="KW-0728">SH3 domain</keyword>
<keyword id="KW-0735">Signal-anchor</keyword>
<keyword id="KW-0808">Transferase</keyword>
<keyword id="KW-0812">Transmembrane</keyword>
<keyword id="KW-1133">Transmembrane helix</keyword>
<organism evidence="8">
    <name type="scientific">Drosophila melanogaster</name>
    <name type="common">Fruit fly</name>
    <dbReference type="NCBI Taxonomy" id="7227"/>
    <lineage>
        <taxon>Eukaryota</taxon>
        <taxon>Metazoa</taxon>
        <taxon>Ecdysozoa</taxon>
        <taxon>Arthropoda</taxon>
        <taxon>Hexapoda</taxon>
        <taxon>Insecta</taxon>
        <taxon>Pterygota</taxon>
        <taxon>Neoptera</taxon>
        <taxon>Endopterygota</taxon>
        <taxon>Diptera</taxon>
        <taxon>Brachycera</taxon>
        <taxon>Muscomorpha</taxon>
        <taxon>Ephydroidea</taxon>
        <taxon>Drosophilidae</taxon>
        <taxon>Drosophila</taxon>
        <taxon>Sophophora</taxon>
    </lineage>
</organism>
<protein>
    <recommendedName>
        <fullName>Alpha-(1,6)-fucosyltransferase</fullName>
        <shortName>Alpha1-6FucT</shortName>
        <ecNumber evidence="6">2.4.1.68</ecNumber>
    </recommendedName>
    <alternativeName>
        <fullName>GDP-L-Fuc:N-acetyl-beta-D-glucosaminide alpha1,6-fucosyltransferase</fullName>
    </alternativeName>
    <alternativeName>
        <fullName>GDP-fucose--glycoprotein fucosyltransferase</fullName>
    </alternativeName>
    <alternativeName>
        <fullName>Glycoprotein 6-alpha-L-fucosyltransferase</fullName>
    </alternativeName>
</protein>
<feature type="chain" id="PRO_0000080530" description="Alpha-(1,6)-fucosyltransferase">
    <location>
        <begin position="1"/>
        <end position="619"/>
    </location>
</feature>
<feature type="topological domain" description="Cytoplasmic" evidence="3">
    <location>
        <begin position="1"/>
        <end position="17"/>
    </location>
</feature>
<feature type="transmembrane region" description="Helical; Signal-anchor for type II membrane protein" evidence="3">
    <location>
        <begin position="18"/>
        <end position="38"/>
    </location>
</feature>
<feature type="topological domain" description="Lumenal" evidence="3">
    <location>
        <begin position="39"/>
        <end position="619"/>
    </location>
</feature>
<feature type="domain" description="GT23" evidence="5">
    <location>
        <begin position="255"/>
        <end position="539"/>
    </location>
</feature>
<feature type="domain" description="SH3" evidence="4">
    <location>
        <begin position="548"/>
        <end position="609"/>
    </location>
</feature>
<feature type="region of interest" description="Important for donor substrate binding" evidence="5">
    <location>
        <begin position="411"/>
        <end position="412"/>
    </location>
</feature>
<feature type="short sequence motif" description="SH3-binding" evidence="3">
    <location>
        <begin position="345"/>
        <end position="351"/>
    </location>
</feature>
<feature type="disulfide bond" evidence="1">
    <location>
        <begin position="253"/>
        <end position="315"/>
    </location>
</feature>
<feature type="disulfide bond" evidence="1">
    <location>
        <begin position="261"/>
        <end position="279"/>
    </location>
</feature>
<feature type="disulfide bond" evidence="1">
    <location>
        <begin position="267"/>
        <end position="271"/>
    </location>
</feature>
<feature type="disulfide bond" evidence="1">
    <location>
        <begin position="511"/>
        <end position="518"/>
    </location>
</feature>
<reference evidence="7 9" key="1">
    <citation type="submission" date="2001-10" db="EMBL/GenBank/DDBJ databases">
        <title>Core a3- and a6-fucosyltransferases in Drosophila: characterization and origin of diversity.</title>
        <authorList>
            <person name="Petit D."/>
            <person name="Picaud F."/>
            <person name="Dupuy F."/>
            <person name="Germot A."/>
            <person name="Julien R."/>
            <person name="Maftah A."/>
        </authorList>
    </citation>
    <scope>NUCLEOTIDE SEQUENCE [MRNA]</scope>
</reference>
<reference evidence="7" key="2">
    <citation type="journal article" date="2000" name="Science">
        <title>The genome sequence of Drosophila melanogaster.</title>
        <authorList>
            <person name="Adams M.D."/>
            <person name="Celniker S.E."/>
            <person name="Holt R.A."/>
            <person name="Evans C.A."/>
            <person name="Gocayne J.D."/>
            <person name="Amanatides P.G."/>
            <person name="Scherer S.E."/>
            <person name="Li P.W."/>
            <person name="Hoskins R.A."/>
            <person name="Galle R.F."/>
            <person name="George R.A."/>
            <person name="Lewis S.E."/>
            <person name="Richards S."/>
            <person name="Ashburner M."/>
            <person name="Henderson S.N."/>
            <person name="Sutton G.G."/>
            <person name="Wortman J.R."/>
            <person name="Yandell M.D."/>
            <person name="Zhang Q."/>
            <person name="Chen L.X."/>
            <person name="Brandon R.C."/>
            <person name="Rogers Y.-H.C."/>
            <person name="Blazej R.G."/>
            <person name="Champe M."/>
            <person name="Pfeiffer B.D."/>
            <person name="Wan K.H."/>
            <person name="Doyle C."/>
            <person name="Baxter E.G."/>
            <person name="Helt G."/>
            <person name="Nelson C.R."/>
            <person name="Miklos G.L.G."/>
            <person name="Abril J.F."/>
            <person name="Agbayani A."/>
            <person name="An H.-J."/>
            <person name="Andrews-Pfannkoch C."/>
            <person name="Baldwin D."/>
            <person name="Ballew R.M."/>
            <person name="Basu A."/>
            <person name="Baxendale J."/>
            <person name="Bayraktaroglu L."/>
            <person name="Beasley E.M."/>
            <person name="Beeson K.Y."/>
            <person name="Benos P.V."/>
            <person name="Berman B.P."/>
            <person name="Bhandari D."/>
            <person name="Bolshakov S."/>
            <person name="Borkova D."/>
            <person name="Botchan M.R."/>
            <person name="Bouck J."/>
            <person name="Brokstein P."/>
            <person name="Brottier P."/>
            <person name="Burtis K.C."/>
            <person name="Busam D.A."/>
            <person name="Butler H."/>
            <person name="Cadieu E."/>
            <person name="Center A."/>
            <person name="Chandra I."/>
            <person name="Cherry J.M."/>
            <person name="Cawley S."/>
            <person name="Dahlke C."/>
            <person name="Davenport L.B."/>
            <person name="Davies P."/>
            <person name="de Pablos B."/>
            <person name="Delcher A."/>
            <person name="Deng Z."/>
            <person name="Mays A.D."/>
            <person name="Dew I."/>
            <person name="Dietz S.M."/>
            <person name="Dodson K."/>
            <person name="Doup L.E."/>
            <person name="Downes M."/>
            <person name="Dugan-Rocha S."/>
            <person name="Dunkov B.C."/>
            <person name="Dunn P."/>
            <person name="Durbin K.J."/>
            <person name="Evangelista C.C."/>
            <person name="Ferraz C."/>
            <person name="Ferriera S."/>
            <person name="Fleischmann W."/>
            <person name="Fosler C."/>
            <person name="Gabrielian A.E."/>
            <person name="Garg N.S."/>
            <person name="Gelbart W.M."/>
            <person name="Glasser K."/>
            <person name="Glodek A."/>
            <person name="Gong F."/>
            <person name="Gorrell J.H."/>
            <person name="Gu Z."/>
            <person name="Guan P."/>
            <person name="Harris M."/>
            <person name="Harris N.L."/>
            <person name="Harvey D.A."/>
            <person name="Heiman T.J."/>
            <person name="Hernandez J.R."/>
            <person name="Houck J."/>
            <person name="Hostin D."/>
            <person name="Houston K.A."/>
            <person name="Howland T.J."/>
            <person name="Wei M.-H."/>
            <person name="Ibegwam C."/>
            <person name="Jalali M."/>
            <person name="Kalush F."/>
            <person name="Karpen G.H."/>
            <person name="Ke Z."/>
            <person name="Kennison J.A."/>
            <person name="Ketchum K.A."/>
            <person name="Kimmel B.E."/>
            <person name="Kodira C.D."/>
            <person name="Kraft C.L."/>
            <person name="Kravitz S."/>
            <person name="Kulp D."/>
            <person name="Lai Z."/>
            <person name="Lasko P."/>
            <person name="Lei Y."/>
            <person name="Levitsky A.A."/>
            <person name="Li J.H."/>
            <person name="Li Z."/>
            <person name="Liang Y."/>
            <person name="Lin X."/>
            <person name="Liu X."/>
            <person name="Mattei B."/>
            <person name="McIntosh T.C."/>
            <person name="McLeod M.P."/>
            <person name="McPherson D."/>
            <person name="Merkulov G."/>
            <person name="Milshina N.V."/>
            <person name="Mobarry C."/>
            <person name="Morris J."/>
            <person name="Moshrefi A."/>
            <person name="Mount S.M."/>
            <person name="Moy M."/>
            <person name="Murphy B."/>
            <person name="Murphy L."/>
            <person name="Muzny D.M."/>
            <person name="Nelson D.L."/>
            <person name="Nelson D.R."/>
            <person name="Nelson K.A."/>
            <person name="Nixon K."/>
            <person name="Nusskern D.R."/>
            <person name="Pacleb J.M."/>
            <person name="Palazzolo M."/>
            <person name="Pittman G.S."/>
            <person name="Pan S."/>
            <person name="Pollard J."/>
            <person name="Puri V."/>
            <person name="Reese M.G."/>
            <person name="Reinert K."/>
            <person name="Remington K."/>
            <person name="Saunders R.D.C."/>
            <person name="Scheeler F."/>
            <person name="Shen H."/>
            <person name="Shue B.C."/>
            <person name="Siden-Kiamos I."/>
            <person name="Simpson M."/>
            <person name="Skupski M.P."/>
            <person name="Smith T.J."/>
            <person name="Spier E."/>
            <person name="Spradling A.C."/>
            <person name="Stapleton M."/>
            <person name="Strong R."/>
            <person name="Sun E."/>
            <person name="Svirskas R."/>
            <person name="Tector C."/>
            <person name="Turner R."/>
            <person name="Venter E."/>
            <person name="Wang A.H."/>
            <person name="Wang X."/>
            <person name="Wang Z.-Y."/>
            <person name="Wassarman D.A."/>
            <person name="Weinstock G.M."/>
            <person name="Weissenbach J."/>
            <person name="Williams S.M."/>
            <person name="Woodage T."/>
            <person name="Worley K.C."/>
            <person name="Wu D."/>
            <person name="Yang S."/>
            <person name="Yao Q.A."/>
            <person name="Ye J."/>
            <person name="Yeh R.-F."/>
            <person name="Zaveri J.S."/>
            <person name="Zhan M."/>
            <person name="Zhang G."/>
            <person name="Zhao Q."/>
            <person name="Zheng L."/>
            <person name="Zheng X.H."/>
            <person name="Zhong F.N."/>
            <person name="Zhong W."/>
            <person name="Zhou X."/>
            <person name="Zhu S.C."/>
            <person name="Zhu X."/>
            <person name="Smith H.O."/>
            <person name="Gibbs R.A."/>
            <person name="Myers E.W."/>
            <person name="Rubin G.M."/>
            <person name="Venter J.C."/>
        </authorList>
    </citation>
    <scope>NUCLEOTIDE SEQUENCE [LARGE SCALE GENOMIC DNA]</scope>
    <source>
        <strain>Berkeley</strain>
    </source>
</reference>
<reference key="3">
    <citation type="journal article" date="2002" name="Genome Biol.">
        <title>Annotation of the Drosophila melanogaster euchromatic genome: a systematic review.</title>
        <authorList>
            <person name="Misra S."/>
            <person name="Crosby M.A."/>
            <person name="Mungall C.J."/>
            <person name="Matthews B.B."/>
            <person name="Campbell K.S."/>
            <person name="Hradecky P."/>
            <person name="Huang Y."/>
            <person name="Kaminker J.S."/>
            <person name="Millburn G.H."/>
            <person name="Prochnik S.E."/>
            <person name="Smith C.D."/>
            <person name="Tupy J.L."/>
            <person name="Whitfield E.J."/>
            <person name="Bayraktaroglu L."/>
            <person name="Berman B.P."/>
            <person name="Bettencourt B.R."/>
            <person name="Celniker S.E."/>
            <person name="de Grey A.D.N.J."/>
            <person name="Drysdale R.A."/>
            <person name="Harris N.L."/>
            <person name="Richter J."/>
            <person name="Russo S."/>
            <person name="Schroeder A.J."/>
            <person name="Shu S.Q."/>
            <person name="Stapleton M."/>
            <person name="Yamada C."/>
            <person name="Ashburner M."/>
            <person name="Gelbart W.M."/>
            <person name="Rubin G.M."/>
            <person name="Lewis S.E."/>
        </authorList>
    </citation>
    <scope>GENOME REANNOTATION</scope>
    <source>
        <strain>Berkeley</strain>
    </source>
</reference>
<reference key="4">
    <citation type="journal article" date="2002" name="Genome Biol.">
        <title>A Drosophila full-length cDNA resource.</title>
        <authorList>
            <person name="Stapleton M."/>
            <person name="Carlson J.W."/>
            <person name="Brokstein P."/>
            <person name="Yu C."/>
            <person name="Champe M."/>
            <person name="George R.A."/>
            <person name="Guarin H."/>
            <person name="Kronmiller B."/>
            <person name="Pacleb J.M."/>
            <person name="Park S."/>
            <person name="Wan K.H."/>
            <person name="Rubin G.M."/>
            <person name="Celniker S.E."/>
        </authorList>
    </citation>
    <scope>NUCLEOTIDE SEQUENCE [LARGE SCALE MRNA]</scope>
    <source>
        <strain>Berkeley</strain>
        <tissue>Testis</tissue>
    </source>
</reference>
<reference evidence="7" key="5">
    <citation type="journal article" date="2002" name="J. Biol. Chem.">
        <title>Composition of Drosophila melanogaster proteome involved in fucosylated glycan metabolism.</title>
        <authorList>
            <person name="Roos C."/>
            <person name="Kolmer M."/>
            <person name="Mattila P."/>
            <person name="Renkonen R."/>
        </authorList>
    </citation>
    <scope>HOMOLOGY</scope>
</reference>
<reference key="6">
    <citation type="journal article" date="2005" name="Glycobiology">
        <title>Fucosyltransferase substrate specificity and the order of fucosylation in invertebrates.</title>
        <authorList>
            <person name="Paschinger K."/>
            <person name="Staudacher E."/>
            <person name="Stemmer U."/>
            <person name="Fabini G."/>
            <person name="Wilson I.B."/>
        </authorList>
    </citation>
    <scope>FUNCTION</scope>
    <scope>CATALYTIC ACTIVITY</scope>
</reference>
<evidence type="ECO:0000250" key="1"/>
<evidence type="ECO:0000250" key="2">
    <source>
        <dbReference type="UniProtKB" id="G5EFE7"/>
    </source>
</evidence>
<evidence type="ECO:0000255" key="3"/>
<evidence type="ECO:0000255" key="4">
    <source>
        <dbReference type="PROSITE-ProRule" id="PRU00192"/>
    </source>
</evidence>
<evidence type="ECO:0000255" key="5">
    <source>
        <dbReference type="PROSITE-ProRule" id="PRU00992"/>
    </source>
</evidence>
<evidence type="ECO:0000269" key="6">
    <source>
    </source>
</evidence>
<evidence type="ECO:0000305" key="7"/>
<evidence type="ECO:0000312" key="8">
    <source>
        <dbReference type="EMBL" id="AAK92875.1"/>
    </source>
</evidence>
<evidence type="ECO:0000312" key="9">
    <source>
        <dbReference type="EMBL" id="AAN63649.1"/>
    </source>
</evidence>
<proteinExistence type="evidence at protein level"/>
<name>FUT8_DROME</name>
<comment type="function">
    <text evidence="6">Catalyzes the addition of fucose in alpha 1-6 linkage to the first GlcNAc residue, next to the peptide chains in N-glycans. The addition is prevented if the GlcNAc residue is already fucosylated.</text>
</comment>
<comment type="catalytic activity">
    <reaction evidence="6">
        <text>N(4)-{beta-D-GlcNAc-(1-&gt;2)-alpha-D-Man-(1-&gt;3)-[beta-D-GlcNAc-(1-&gt;2)-alpha-D-Man-(1-&gt;6)]-beta-D-Man-(1-&gt;4)-beta-D-GlcNAc-(1-&gt;4)-beta-D-GlcNAc}-L-asparaginyl-[protein] + GDP-beta-L-fucose = an N(4)-{beta-D-GlcNAc-(1-&gt;2)-alpha-D-Man-(1-&gt;3)-[beta-D-GlcNAc-(1-&gt;2)-alpha-D-Man-(1-&gt;6)]-beta-D-Man-(1-&gt;4)-beta-D-GlcNAc-(1-&gt;4)-[alpha-L-Fuc-(1-&gt;6)]-beta-D-GlcNAc}-L-asparaginyl-[protein] + GDP + H(+)</text>
        <dbReference type="Rhea" id="RHEA:12985"/>
        <dbReference type="Rhea" id="RHEA-COMP:13526"/>
        <dbReference type="Rhea" id="RHEA-COMP:13532"/>
        <dbReference type="ChEBI" id="CHEBI:15378"/>
        <dbReference type="ChEBI" id="CHEBI:57273"/>
        <dbReference type="ChEBI" id="CHEBI:58189"/>
        <dbReference type="ChEBI" id="CHEBI:60651"/>
        <dbReference type="ChEBI" id="CHEBI:137207"/>
        <dbReference type="EC" id="2.4.1.68"/>
    </reaction>
</comment>
<comment type="cofactor">
    <cofactor evidence="2">
        <name>Mn(2+)</name>
        <dbReference type="ChEBI" id="CHEBI:29035"/>
    </cofactor>
    <cofactor evidence="2">
        <name>Mg(2+)</name>
        <dbReference type="ChEBI" id="CHEBI:18420"/>
    </cofactor>
    <text evidence="2">May also use Ca(2+). The enzyme has substantial activity without divalent cations.</text>
</comment>
<comment type="pathway">
    <text>Protein modification; protein glycosylation.</text>
</comment>
<comment type="subcellular location">
    <subcellularLocation>
        <location evidence="1">Golgi apparatus</location>
        <location evidence="1">Golgi stack membrane</location>
        <topology evidence="1">Single-pass type II membrane protein</topology>
    </subcellularLocation>
    <text evidence="1">Membrane-bound form in trans cisternae of Golgi.</text>
</comment>
<comment type="similarity">
    <text evidence="5">Belongs to the glycosyltransferase 23 family.</text>
</comment>
<sequence>MLLVRQLFGASANSWARALIIFVLAWIGLVYVFVVKLTNTQGQQAAGESELNARRISQALQMLEHTRQRNEELKQLIDELMSDQLDKQSAMKLVQRLENDALNPKLAPEVAGPEPESMFESAPADLRGWNNVAEGAPNDLEAGVPDHGEFEPSLEYEFTRRRIQTNIGEIWNFFSSELGKVRKAVAAGHASADLEESINQVLLQGAEHKRSLLSDMERMRQSDGYEAWRHKEARDLSDLVQRRLHHLQNPSDCQNARKLVCKLNKGCGYGCQLHHVVYCFIVAYATERTLILKSRGWRYHKGGWEEVFQPVSNSCHDAGTANTYNWPGKPNTQVLVLPIIDSLMPRPPYLPLAVPEDLAPRLKRLHGDPIVWWVGQFLKYLLRPQPTTRDFLTSGMRNLGWERPIVGVHVRRTDKVGTEAACHSVEEYMTYVEDYYRTLEVNGSTVARRIFLASDDAQVIEEARRKYPQYQIIGDPEVARMASVSTRYTDTALNGIILDIHLLSMSDHLVCTFSSQVCRVAYEIMQTMYPDAAHRFKSLDDIYYYGGQNAHNRRVVIAHKPRTHEDLQLRVGDLVSVAGNHWDGNSKGKNTRTNQGGLFPSFKVEEKVDTAKLPLYAGI</sequence>
<gene>
    <name type="primary">FucT6</name>
    <name type="ORF">CG2448</name>
</gene>
<dbReference type="EC" id="2.4.1.68" evidence="6"/>
<dbReference type="EMBL" id="AF441264">
    <property type="protein sequence ID" value="AAN63649.1"/>
    <property type="molecule type" value="mRNA"/>
</dbReference>
<dbReference type="EMBL" id="AE014298">
    <property type="protein sequence ID" value="AAF48079.1"/>
    <property type="molecule type" value="Genomic_DNA"/>
</dbReference>
<dbReference type="EMBL" id="AY051451">
    <property type="protein sequence ID" value="AAK92875.1"/>
    <property type="molecule type" value="mRNA"/>
</dbReference>
<dbReference type="RefSeq" id="NP_572740.1">
    <property type="nucleotide sequence ID" value="NM_132512.4"/>
</dbReference>
<dbReference type="SMR" id="Q9VYV5"/>
<dbReference type="BioGRID" id="58529">
    <property type="interactions" value="3"/>
</dbReference>
<dbReference type="DIP" id="DIP-21409N"/>
<dbReference type="FunCoup" id="Q9VYV5">
    <property type="interactions" value="566"/>
</dbReference>
<dbReference type="IntAct" id="Q9VYV5">
    <property type="interactions" value="2"/>
</dbReference>
<dbReference type="STRING" id="7227.FBpp0073457"/>
<dbReference type="CAZy" id="GT23">
    <property type="family name" value="Glycosyltransferase Family 23"/>
</dbReference>
<dbReference type="PaxDb" id="7227-FBpp0073457"/>
<dbReference type="DNASU" id="32122"/>
<dbReference type="EnsemblMetazoa" id="FBtr0073620">
    <property type="protein sequence ID" value="FBpp0073457"/>
    <property type="gene ID" value="FBgn0030327"/>
</dbReference>
<dbReference type="GeneID" id="32122"/>
<dbReference type="KEGG" id="dme:Dmel_CG2448"/>
<dbReference type="AGR" id="FB:FBgn0030327"/>
<dbReference type="CTD" id="32122"/>
<dbReference type="FlyBase" id="FBgn0030327">
    <property type="gene designation" value="FucT6"/>
</dbReference>
<dbReference type="VEuPathDB" id="VectorBase:FBgn0030327"/>
<dbReference type="eggNOG" id="KOG3705">
    <property type="taxonomic scope" value="Eukaryota"/>
</dbReference>
<dbReference type="GeneTree" id="ENSGT00530000063737"/>
<dbReference type="HOGENOM" id="CLU_021940_1_0_1"/>
<dbReference type="InParanoid" id="Q9VYV5"/>
<dbReference type="OMA" id="SDGYEAW"/>
<dbReference type="OrthoDB" id="2014825at2759"/>
<dbReference type="PhylomeDB" id="Q9VYV5"/>
<dbReference type="Reactome" id="R-DME-975578">
    <property type="pathway name" value="Reactions specific to the complex N-glycan synthesis pathway"/>
</dbReference>
<dbReference type="UniPathway" id="UPA00378"/>
<dbReference type="BioGRID-ORCS" id="32122">
    <property type="hits" value="0 hits in 1 CRISPR screen"/>
</dbReference>
<dbReference type="ChiTaRS" id="FucT6">
    <property type="organism name" value="fly"/>
</dbReference>
<dbReference type="GenomeRNAi" id="32122"/>
<dbReference type="PRO" id="PR:Q9VYV5"/>
<dbReference type="Proteomes" id="UP000000803">
    <property type="component" value="Chromosome X"/>
</dbReference>
<dbReference type="Bgee" id="FBgn0030327">
    <property type="expression patterns" value="Expressed in oviduct (Drosophila) and 144 other cell types or tissues"/>
</dbReference>
<dbReference type="GO" id="GO:0032580">
    <property type="term" value="C:Golgi cisterna membrane"/>
    <property type="evidence" value="ECO:0007669"/>
    <property type="project" value="UniProtKB-SubCell"/>
</dbReference>
<dbReference type="GO" id="GO:0046921">
    <property type="term" value="F:alpha-(1-&gt;6)-fucosyltransferase activity"/>
    <property type="evidence" value="ECO:0000314"/>
    <property type="project" value="FlyBase"/>
</dbReference>
<dbReference type="GO" id="GO:0008424">
    <property type="term" value="F:glycoprotein 6-alpha-L-fucosyltransferase activity"/>
    <property type="evidence" value="ECO:0000250"/>
    <property type="project" value="UniProtKB"/>
</dbReference>
<dbReference type="GO" id="GO:0046872">
    <property type="term" value="F:metal ion binding"/>
    <property type="evidence" value="ECO:0007669"/>
    <property type="project" value="UniProtKB-KW"/>
</dbReference>
<dbReference type="GO" id="GO:0046368">
    <property type="term" value="P:GDP-L-fucose metabolic process"/>
    <property type="evidence" value="ECO:0000250"/>
    <property type="project" value="UniProtKB"/>
</dbReference>
<dbReference type="GO" id="GO:0036071">
    <property type="term" value="P:N-glycan fucosylation"/>
    <property type="evidence" value="ECO:0000318"/>
    <property type="project" value="GO_Central"/>
</dbReference>
<dbReference type="GO" id="GO:0006487">
    <property type="term" value="P:protein N-linked glycosylation"/>
    <property type="evidence" value="ECO:0000318"/>
    <property type="project" value="GO_Central"/>
</dbReference>
<dbReference type="GO" id="GO:0018279">
    <property type="term" value="P:protein N-linked glycosylation via asparagine"/>
    <property type="evidence" value="ECO:0000250"/>
    <property type="project" value="UniProtKB"/>
</dbReference>
<dbReference type="CDD" id="cd11300">
    <property type="entry name" value="Fut8_like"/>
    <property type="match status" value="1"/>
</dbReference>
<dbReference type="CDD" id="cd11792">
    <property type="entry name" value="SH3_Fut8"/>
    <property type="match status" value="1"/>
</dbReference>
<dbReference type="FunFam" id="1.10.287.1060:FF:000017">
    <property type="entry name" value="Alpha-(1,6)-fucosyltransferase"/>
    <property type="match status" value="1"/>
</dbReference>
<dbReference type="FunFam" id="2.30.30.40:FF:000070">
    <property type="entry name" value="Alpha-(1,6)-fucosyltransferase"/>
    <property type="match status" value="1"/>
</dbReference>
<dbReference type="FunFam" id="3.40.50.11350:FF:000001">
    <property type="entry name" value="Alpha-(1,6)-fucosyltransferase"/>
    <property type="match status" value="1"/>
</dbReference>
<dbReference type="Gene3D" id="3.40.50.11350">
    <property type="match status" value="1"/>
</dbReference>
<dbReference type="Gene3D" id="1.10.287.1060">
    <property type="entry name" value="ESAT-6-like"/>
    <property type="match status" value="1"/>
</dbReference>
<dbReference type="Gene3D" id="2.30.30.40">
    <property type="entry name" value="SH3 Domains"/>
    <property type="match status" value="1"/>
</dbReference>
<dbReference type="InterPro" id="IPR015827">
    <property type="entry name" value="Fut8"/>
</dbReference>
<dbReference type="InterPro" id="IPR045573">
    <property type="entry name" value="Fut8_N_cat"/>
</dbReference>
<dbReference type="InterPro" id="IPR035653">
    <property type="entry name" value="Fut8_SH3"/>
</dbReference>
<dbReference type="InterPro" id="IPR027350">
    <property type="entry name" value="GT23_dom"/>
</dbReference>
<dbReference type="InterPro" id="IPR036028">
    <property type="entry name" value="SH3-like_dom_sf"/>
</dbReference>
<dbReference type="InterPro" id="IPR001452">
    <property type="entry name" value="SH3_domain"/>
</dbReference>
<dbReference type="PANTHER" id="PTHR13132">
    <property type="entry name" value="ALPHA- 1,6 -FUCOSYLTRANSFERASE"/>
    <property type="match status" value="1"/>
</dbReference>
<dbReference type="PANTHER" id="PTHR13132:SF29">
    <property type="entry name" value="ALPHA-(1,6)-FUCOSYLTRANSFERASE"/>
    <property type="match status" value="1"/>
</dbReference>
<dbReference type="Pfam" id="PF19745">
    <property type="entry name" value="FUT8_N_cat"/>
    <property type="match status" value="1"/>
</dbReference>
<dbReference type="PIRSF" id="PIRSF000472">
    <property type="entry name" value="Alpha1_6FUT_euk"/>
    <property type="match status" value="1"/>
</dbReference>
<dbReference type="SUPFAM" id="SSF50044">
    <property type="entry name" value="SH3-domain"/>
    <property type="match status" value="1"/>
</dbReference>
<dbReference type="PROSITE" id="PS51659">
    <property type="entry name" value="GT23"/>
    <property type="match status" value="1"/>
</dbReference>
<dbReference type="PROSITE" id="PS50002">
    <property type="entry name" value="SH3"/>
    <property type="match status" value="1"/>
</dbReference>
<accession>Q9VYV5</accession>